<evidence type="ECO:0000255" key="1">
    <source>
        <dbReference type="HAMAP-Rule" id="MF_01868"/>
    </source>
</evidence>
<reference key="1">
    <citation type="journal article" date="2008" name="J. Bacteriol.">
        <title>The pangenome structure of Escherichia coli: comparative genomic analysis of E. coli commensal and pathogenic isolates.</title>
        <authorList>
            <person name="Rasko D.A."/>
            <person name="Rosovitz M.J."/>
            <person name="Myers G.S.A."/>
            <person name="Mongodin E.F."/>
            <person name="Fricke W.F."/>
            <person name="Gajer P."/>
            <person name="Crabtree J."/>
            <person name="Sebaihia M."/>
            <person name="Thomson N.R."/>
            <person name="Chaudhuri R."/>
            <person name="Henderson I.R."/>
            <person name="Sperandio V."/>
            <person name="Ravel J."/>
        </authorList>
    </citation>
    <scope>NUCLEOTIDE SEQUENCE [LARGE SCALE GENOMIC DNA]</scope>
    <source>
        <strain>E24377A / ETEC</strain>
    </source>
</reference>
<sequence>MLAFCRSSLKSKKYFIILLALAAIAGLGTHAAWSSNGLPRIDNKTLARLAQQHPVVVLFRHAERCDRSTNQCLSDKTGITVKGTQDARELGNAFSADIPDFDLYSSNTVRTIQSATWFSAGKKLTVDKRLLQCGNEIYSAIKDLQSKAPDKNIVIFTHNHCLTYIAKNKRDATFKPDYLDGLVMHVEKGKVYLDGEFVNH</sequence>
<protein>
    <recommendedName>
        <fullName evidence="1">Lipopolysaccharide core heptose(II)-phosphate phosphatase</fullName>
        <ecNumber evidence="1">3.1.3.-</ecNumber>
    </recommendedName>
</protein>
<gene>
    <name evidence="1" type="primary">ais</name>
    <name type="ordered locus">EcE24377A_2547</name>
</gene>
<dbReference type="EC" id="3.1.3.-" evidence="1"/>
<dbReference type="EMBL" id="CP000800">
    <property type="protein sequence ID" value="ABV21050.1"/>
    <property type="molecule type" value="Genomic_DNA"/>
</dbReference>
<dbReference type="RefSeq" id="WP_001297077.1">
    <property type="nucleotide sequence ID" value="NC_009801.1"/>
</dbReference>
<dbReference type="SMR" id="A7ZP70"/>
<dbReference type="GeneID" id="93774922"/>
<dbReference type="KEGG" id="ecw:EcE24377A_2547"/>
<dbReference type="HOGENOM" id="CLU_106705_1_0_6"/>
<dbReference type="UniPathway" id="UPA00451"/>
<dbReference type="Proteomes" id="UP000001122">
    <property type="component" value="Chromosome"/>
</dbReference>
<dbReference type="GO" id="GO:0042597">
    <property type="term" value="C:periplasmic space"/>
    <property type="evidence" value="ECO:0007669"/>
    <property type="project" value="UniProtKB-SubCell"/>
</dbReference>
<dbReference type="GO" id="GO:0016791">
    <property type="term" value="F:phosphatase activity"/>
    <property type="evidence" value="ECO:0007669"/>
    <property type="project" value="UniProtKB-UniRule"/>
</dbReference>
<dbReference type="GO" id="GO:0008653">
    <property type="term" value="P:lipopolysaccharide metabolic process"/>
    <property type="evidence" value="ECO:0007669"/>
    <property type="project" value="UniProtKB-UniRule"/>
</dbReference>
<dbReference type="CDD" id="cd07040">
    <property type="entry name" value="HP"/>
    <property type="match status" value="1"/>
</dbReference>
<dbReference type="Gene3D" id="3.40.50.1240">
    <property type="entry name" value="Phosphoglycerate mutase-like"/>
    <property type="match status" value="1"/>
</dbReference>
<dbReference type="HAMAP" id="MF_01868">
    <property type="entry name" value="Ais"/>
    <property type="match status" value="1"/>
</dbReference>
<dbReference type="InterPro" id="IPR013078">
    <property type="entry name" value="His_Pase_superF_clade-1"/>
</dbReference>
<dbReference type="InterPro" id="IPR029033">
    <property type="entry name" value="His_PPase_superfam"/>
</dbReference>
<dbReference type="InterPro" id="IPR011310">
    <property type="entry name" value="LipoPS_heptP_Pase"/>
</dbReference>
<dbReference type="NCBIfam" id="NF011945">
    <property type="entry name" value="PRK15416.1"/>
    <property type="match status" value="1"/>
</dbReference>
<dbReference type="Pfam" id="PF00300">
    <property type="entry name" value="His_Phos_1"/>
    <property type="match status" value="1"/>
</dbReference>
<dbReference type="PIRSF" id="PIRSF011416">
    <property type="entry name" value="Ais-TraG-AfrS"/>
    <property type="match status" value="1"/>
</dbReference>
<dbReference type="SUPFAM" id="SSF53254">
    <property type="entry name" value="Phosphoglycerate mutase-like"/>
    <property type="match status" value="1"/>
</dbReference>
<organism>
    <name type="scientific">Escherichia coli O139:H28 (strain E24377A / ETEC)</name>
    <dbReference type="NCBI Taxonomy" id="331111"/>
    <lineage>
        <taxon>Bacteria</taxon>
        <taxon>Pseudomonadati</taxon>
        <taxon>Pseudomonadota</taxon>
        <taxon>Gammaproteobacteria</taxon>
        <taxon>Enterobacterales</taxon>
        <taxon>Enterobacteriaceae</taxon>
        <taxon>Escherichia</taxon>
    </lineage>
</organism>
<feature type="signal peptide" evidence="1">
    <location>
        <begin position="1"/>
        <end position="25"/>
    </location>
</feature>
<feature type="chain" id="PRO_0000380561" description="Lipopolysaccharide core heptose(II)-phosphate phosphatase">
    <location>
        <begin position="26"/>
        <end position="200"/>
    </location>
</feature>
<name>AIS_ECO24</name>
<keyword id="KW-0378">Hydrolase</keyword>
<keyword id="KW-0574">Periplasm</keyword>
<keyword id="KW-1185">Reference proteome</keyword>
<keyword id="KW-0732">Signal</keyword>
<proteinExistence type="inferred from homology"/>
<accession>A7ZP70</accession>
<comment type="function">
    <text evidence="1">Catalyzes the dephosphorylation of heptose(II) of the outer membrane lipopolysaccharide core.</text>
</comment>
<comment type="pathway">
    <text evidence="1">Bacterial outer membrane biogenesis; lipopolysaccharide metabolism.</text>
</comment>
<comment type="subcellular location">
    <subcellularLocation>
        <location evidence="1">Periplasm</location>
    </subcellularLocation>
</comment>
<comment type="similarity">
    <text evidence="1">Belongs to the phosphoglycerate mutase family. Ais subfamily.</text>
</comment>